<dbReference type="EC" id="3.4.21.-"/>
<dbReference type="EMBL" id="AF490536">
    <property type="protein sequence ID" value="AAM09695.1"/>
    <property type="molecule type" value="mRNA"/>
</dbReference>
<dbReference type="SMR" id="Q8QG86"/>
<dbReference type="MEROPS" id="S01.179"/>
<dbReference type="GO" id="GO:0005576">
    <property type="term" value="C:extracellular region"/>
    <property type="evidence" value="ECO:0007669"/>
    <property type="project" value="UniProtKB-SubCell"/>
</dbReference>
<dbReference type="GO" id="GO:0030141">
    <property type="term" value="C:secretory granule"/>
    <property type="evidence" value="ECO:0007669"/>
    <property type="project" value="TreeGrafter"/>
</dbReference>
<dbReference type="GO" id="GO:0004252">
    <property type="term" value="F:serine-type endopeptidase activity"/>
    <property type="evidence" value="ECO:0007669"/>
    <property type="project" value="InterPro"/>
</dbReference>
<dbReference type="GO" id="GO:0090729">
    <property type="term" value="F:toxin activity"/>
    <property type="evidence" value="ECO:0007669"/>
    <property type="project" value="UniProtKB-KW"/>
</dbReference>
<dbReference type="GO" id="GO:0006508">
    <property type="term" value="P:proteolysis"/>
    <property type="evidence" value="ECO:0007669"/>
    <property type="project" value="UniProtKB-KW"/>
</dbReference>
<dbReference type="CDD" id="cd00190">
    <property type="entry name" value="Tryp_SPc"/>
    <property type="match status" value="1"/>
</dbReference>
<dbReference type="FunFam" id="2.40.10.10:FF:000158">
    <property type="entry name" value="Thrombin-like enzyme saxthrombin"/>
    <property type="match status" value="1"/>
</dbReference>
<dbReference type="FunFam" id="2.40.10.10:FF:000153">
    <property type="entry name" value="Venom plasminogen activator TSV-PA"/>
    <property type="match status" value="1"/>
</dbReference>
<dbReference type="Gene3D" id="2.40.10.10">
    <property type="entry name" value="Trypsin-like serine proteases"/>
    <property type="match status" value="2"/>
</dbReference>
<dbReference type="InterPro" id="IPR009003">
    <property type="entry name" value="Peptidase_S1_PA"/>
</dbReference>
<dbReference type="InterPro" id="IPR043504">
    <property type="entry name" value="Peptidase_S1_PA_chymotrypsin"/>
</dbReference>
<dbReference type="InterPro" id="IPR001314">
    <property type="entry name" value="Peptidase_S1A"/>
</dbReference>
<dbReference type="InterPro" id="IPR001254">
    <property type="entry name" value="Trypsin_dom"/>
</dbReference>
<dbReference type="InterPro" id="IPR018114">
    <property type="entry name" value="TRYPSIN_HIS"/>
</dbReference>
<dbReference type="InterPro" id="IPR033116">
    <property type="entry name" value="TRYPSIN_SER"/>
</dbReference>
<dbReference type="PANTHER" id="PTHR24271:SF47">
    <property type="entry name" value="KALLIKREIN-1"/>
    <property type="match status" value="1"/>
</dbReference>
<dbReference type="PANTHER" id="PTHR24271">
    <property type="entry name" value="KALLIKREIN-RELATED"/>
    <property type="match status" value="1"/>
</dbReference>
<dbReference type="Pfam" id="PF00089">
    <property type="entry name" value="Trypsin"/>
    <property type="match status" value="1"/>
</dbReference>
<dbReference type="PRINTS" id="PR00722">
    <property type="entry name" value="CHYMOTRYPSIN"/>
</dbReference>
<dbReference type="SMART" id="SM00020">
    <property type="entry name" value="Tryp_SPc"/>
    <property type="match status" value="1"/>
</dbReference>
<dbReference type="SUPFAM" id="SSF50494">
    <property type="entry name" value="Trypsin-like serine proteases"/>
    <property type="match status" value="1"/>
</dbReference>
<dbReference type="PROSITE" id="PS50240">
    <property type="entry name" value="TRYPSIN_DOM"/>
    <property type="match status" value="1"/>
</dbReference>
<dbReference type="PROSITE" id="PS00134">
    <property type="entry name" value="TRYPSIN_HIS"/>
    <property type="match status" value="1"/>
</dbReference>
<dbReference type="PROSITE" id="PS00135">
    <property type="entry name" value="TRYPSIN_SER"/>
    <property type="match status" value="1"/>
</dbReference>
<name>VSP_BOTIN</name>
<keyword id="KW-1015">Disulfide bond</keyword>
<keyword id="KW-0325">Glycoprotein</keyword>
<keyword id="KW-1199">Hemostasis impairing toxin</keyword>
<keyword id="KW-0378">Hydrolase</keyword>
<keyword id="KW-0645">Protease</keyword>
<keyword id="KW-0964">Secreted</keyword>
<keyword id="KW-0720">Serine protease</keyword>
<keyword id="KW-0732">Signal</keyword>
<keyword id="KW-0800">Toxin</keyword>
<keyword id="KW-0865">Zymogen</keyword>
<protein>
    <recommendedName>
        <fullName>Snake venom serine protease BITS01A</fullName>
        <shortName>SVSP</shortName>
        <ecNumber>3.4.21.-</ecNumber>
    </recommendedName>
</protein>
<proteinExistence type="evidence at transcript level"/>
<accession>Q8QG86</accession>
<organism>
    <name type="scientific">Bothrops insularis</name>
    <name type="common">Golden lancehead</name>
    <name type="synonym">Lachesis insularis</name>
    <dbReference type="NCBI Taxonomy" id="8723"/>
    <lineage>
        <taxon>Eukaryota</taxon>
        <taxon>Metazoa</taxon>
        <taxon>Chordata</taxon>
        <taxon>Craniata</taxon>
        <taxon>Vertebrata</taxon>
        <taxon>Euteleostomi</taxon>
        <taxon>Lepidosauria</taxon>
        <taxon>Squamata</taxon>
        <taxon>Bifurcata</taxon>
        <taxon>Unidentata</taxon>
        <taxon>Episquamata</taxon>
        <taxon>Toxicofera</taxon>
        <taxon>Serpentes</taxon>
        <taxon>Colubroidea</taxon>
        <taxon>Viperidae</taxon>
        <taxon>Crotalinae</taxon>
        <taxon>Bothrops</taxon>
    </lineage>
</organism>
<feature type="signal peptide" evidence="2">
    <location>
        <begin position="1"/>
        <end position="18"/>
    </location>
</feature>
<feature type="propeptide" id="PRO_0000294986" evidence="1">
    <location>
        <begin position="19"/>
        <end position="24"/>
    </location>
</feature>
<feature type="chain" id="PRO_0000294987" description="Snake venom serine protease BITS01A">
    <location>
        <begin position="25"/>
        <end position="257"/>
    </location>
</feature>
<feature type="domain" description="Peptidase S1" evidence="3">
    <location>
        <begin position="25"/>
        <end position="248"/>
    </location>
</feature>
<feature type="active site" description="Charge relay system" evidence="1">
    <location>
        <position position="64"/>
    </location>
</feature>
<feature type="active site" description="Charge relay system" evidence="1">
    <location>
        <position position="109"/>
    </location>
</feature>
<feature type="active site" description="Charge relay system" evidence="1">
    <location>
        <position position="203"/>
    </location>
</feature>
<feature type="site" description="Required for specificity" evidence="1">
    <location>
        <position position="197"/>
    </location>
</feature>
<feature type="glycosylation site" description="N-linked (GlcNAc...) asparagine" evidence="2">
    <location>
        <position position="101"/>
    </location>
</feature>
<feature type="glycosylation site" description="N-linked (GlcNAc...) asparagine" evidence="2">
    <location>
        <position position="121"/>
    </location>
</feature>
<feature type="glycosylation site" description="N-linked (GlcNAc...) asparagine" evidence="2">
    <location>
        <position position="153"/>
    </location>
</feature>
<feature type="glycosylation site" description="N-linked (GlcNAc...) asparagine" evidence="2">
    <location>
        <position position="169"/>
    </location>
</feature>
<feature type="glycosylation site" description="N-linked (GlcNAc...) asparagine" evidence="2">
    <location>
        <position position="210"/>
    </location>
</feature>
<feature type="glycosylation site" description="N-linked (GlcNAc...) asparagine" evidence="2">
    <location>
        <position position="250"/>
    </location>
</feature>
<feature type="disulfide bond" evidence="3">
    <location>
        <begin position="31"/>
        <end position="162"/>
    </location>
</feature>
<feature type="disulfide bond" evidence="3">
    <location>
        <begin position="49"/>
        <end position="65"/>
    </location>
</feature>
<feature type="disulfide bond" evidence="3">
    <location>
        <begin position="97"/>
        <end position="255"/>
    </location>
</feature>
<feature type="disulfide bond" evidence="3">
    <location>
        <begin position="141"/>
        <end position="209"/>
    </location>
</feature>
<feature type="disulfide bond" evidence="3">
    <location>
        <begin position="173"/>
        <end position="188"/>
    </location>
</feature>
<feature type="disulfide bond" evidence="3">
    <location>
        <begin position="199"/>
        <end position="224"/>
    </location>
</feature>
<sequence>MVLIRVIANLLILQVSYAQKSSELVVGGDECDINEHPFLAFLYSHGYFCGLTLINQEWVLTAAHCDRRFMRIYLGIHARSVANDDEVIRYPKEKFICPNKNMSDEKDKDIMLIRLNRPVKNSTHIAPISLPSNPPSVGSVCRVMGWGSITIPNDTYPDVPHCANINLVNDTVCRGAYKRFPAKSRTLCAGVLQGGKDTCVGDSGGPLICNGTFQGIVSWGGKVCARPRKPALYTKVFDYLPWIQSIIAGNKTATCPP</sequence>
<reference key="1">
    <citation type="journal article" date="2002" name="Gene">
        <title>A survey of gene expression and diversity in the venom glands of the pitviper snake Bothrops insularis through the generation of expressed sequence tags (ESTs).</title>
        <authorList>
            <person name="Junqueira-de-Azevedo I.L.M."/>
            <person name="Ho P.L."/>
        </authorList>
    </citation>
    <scope>NUCLEOTIDE SEQUENCE [MRNA]</scope>
    <source>
        <tissue>Venom gland</tissue>
    </source>
</reference>
<evidence type="ECO:0000250" key="1"/>
<evidence type="ECO:0000255" key="2"/>
<evidence type="ECO:0000255" key="3">
    <source>
        <dbReference type="PROSITE-ProRule" id="PRU00274"/>
    </source>
</evidence>
<comment type="function">
    <text evidence="1">Snake venom serine protease that may act in the hemostasis system of the prey.</text>
</comment>
<comment type="subunit">
    <text evidence="1">Monomer.</text>
</comment>
<comment type="subcellular location">
    <subcellularLocation>
        <location evidence="1">Secreted</location>
    </subcellularLocation>
</comment>
<comment type="tissue specificity">
    <text>Expressed by the venom gland.</text>
</comment>
<comment type="similarity">
    <text evidence="3">Belongs to the peptidase S1 family. Snake venom subfamily.</text>
</comment>